<comment type="function">
    <text>ATP-dependent RNA helicase involved in 40S ribosomal subunit biogenesis. Required for the processing and cleavage of 35S pre-rRNA at sites A0, A1, and A2, leading to mature 18S rRNA.</text>
</comment>
<comment type="catalytic activity">
    <reaction>
        <text>ATP + H2O = ADP + phosphate + H(+)</text>
        <dbReference type="Rhea" id="RHEA:13065"/>
        <dbReference type="ChEBI" id="CHEBI:15377"/>
        <dbReference type="ChEBI" id="CHEBI:15378"/>
        <dbReference type="ChEBI" id="CHEBI:30616"/>
        <dbReference type="ChEBI" id="CHEBI:43474"/>
        <dbReference type="ChEBI" id="CHEBI:456216"/>
        <dbReference type="EC" id="3.6.4.13"/>
    </reaction>
</comment>
<comment type="subunit">
    <text evidence="1">Associates in the nucleolus with the 60S and pre-60S ribosomal subunits.</text>
</comment>
<comment type="subcellular location">
    <subcellularLocation>
        <location evidence="1">Nucleus</location>
        <location evidence="1">Nucleolus</location>
    </subcellularLocation>
</comment>
<comment type="domain">
    <text>The Q motif is unique to and characteristic of the DEAD box family of RNA helicases and controls ATP binding and hydrolysis.</text>
</comment>
<comment type="similarity">
    <text evidence="5">Belongs to the DEAD box helicase family. DDX18/HAS1 subfamily.</text>
</comment>
<keyword id="KW-0067">ATP-binding</keyword>
<keyword id="KW-0347">Helicase</keyword>
<keyword id="KW-0378">Hydrolase</keyword>
<keyword id="KW-0547">Nucleotide-binding</keyword>
<keyword id="KW-0539">Nucleus</keyword>
<keyword id="KW-1185">Reference proteome</keyword>
<keyword id="KW-0690">Ribosome biogenesis</keyword>
<keyword id="KW-0694">RNA-binding</keyword>
<keyword id="KW-0698">rRNA processing</keyword>
<gene>
    <name type="primary">has-1</name>
    <name type="ORF">NCU09349</name>
</gene>
<protein>
    <recommendedName>
        <fullName>ATP-dependent RNA helicase has-1</fullName>
        <ecNumber>3.6.4.13</ecNumber>
    </recommendedName>
</protein>
<dbReference type="EC" id="3.6.4.13"/>
<dbReference type="EMBL" id="CM002237">
    <property type="protein sequence ID" value="EAA29692.1"/>
    <property type="molecule type" value="Genomic_DNA"/>
</dbReference>
<dbReference type="RefSeq" id="XP_958928.1">
    <property type="nucleotide sequence ID" value="XM_953835.2"/>
</dbReference>
<dbReference type="SMR" id="Q7S2N9"/>
<dbReference type="FunCoup" id="Q7S2N9">
    <property type="interactions" value="1124"/>
</dbReference>
<dbReference type="STRING" id="367110.Q7S2N9"/>
<dbReference type="PaxDb" id="5141-EFNCRP00000009111"/>
<dbReference type="EnsemblFungi" id="EAA29692">
    <property type="protein sequence ID" value="EAA29692"/>
    <property type="gene ID" value="NCU09349"/>
</dbReference>
<dbReference type="GeneID" id="3875075"/>
<dbReference type="KEGG" id="ncr:NCU09349"/>
<dbReference type="VEuPathDB" id="FungiDB:NCU09349"/>
<dbReference type="HOGENOM" id="CLU_003041_26_5_1"/>
<dbReference type="InParanoid" id="Q7S2N9"/>
<dbReference type="OMA" id="LMEFHSQ"/>
<dbReference type="OrthoDB" id="10259640at2759"/>
<dbReference type="Proteomes" id="UP000001805">
    <property type="component" value="Chromosome 6, Linkage Group II"/>
</dbReference>
<dbReference type="GO" id="GO:0005635">
    <property type="term" value="C:nuclear envelope"/>
    <property type="evidence" value="ECO:0007669"/>
    <property type="project" value="EnsemblFungi"/>
</dbReference>
<dbReference type="GO" id="GO:0005730">
    <property type="term" value="C:nucleolus"/>
    <property type="evidence" value="ECO:0000318"/>
    <property type="project" value="GO_Central"/>
</dbReference>
<dbReference type="GO" id="GO:0030687">
    <property type="term" value="C:preribosome, large subunit precursor"/>
    <property type="evidence" value="ECO:0007669"/>
    <property type="project" value="EnsemblFungi"/>
</dbReference>
<dbReference type="GO" id="GO:0032040">
    <property type="term" value="C:small-subunit processome"/>
    <property type="evidence" value="ECO:0007669"/>
    <property type="project" value="EnsemblFungi"/>
</dbReference>
<dbReference type="GO" id="GO:0005524">
    <property type="term" value="F:ATP binding"/>
    <property type="evidence" value="ECO:0007669"/>
    <property type="project" value="UniProtKB-KW"/>
</dbReference>
<dbReference type="GO" id="GO:0016887">
    <property type="term" value="F:ATP hydrolysis activity"/>
    <property type="evidence" value="ECO:0007669"/>
    <property type="project" value="RHEA"/>
</dbReference>
<dbReference type="GO" id="GO:0042802">
    <property type="term" value="F:identical protein binding"/>
    <property type="evidence" value="ECO:0007669"/>
    <property type="project" value="EnsemblFungi"/>
</dbReference>
<dbReference type="GO" id="GO:0003723">
    <property type="term" value="F:RNA binding"/>
    <property type="evidence" value="ECO:0007669"/>
    <property type="project" value="UniProtKB-KW"/>
</dbReference>
<dbReference type="GO" id="GO:0003724">
    <property type="term" value="F:RNA helicase activity"/>
    <property type="evidence" value="ECO:0007669"/>
    <property type="project" value="UniProtKB-EC"/>
</dbReference>
<dbReference type="GO" id="GO:0000463">
    <property type="term" value="P:maturation of LSU-rRNA from tricistronic rRNA transcript (SSU-rRNA, 5.8S rRNA, LSU-rRNA)"/>
    <property type="evidence" value="ECO:0000318"/>
    <property type="project" value="GO_Central"/>
</dbReference>
<dbReference type="GO" id="GO:0000462">
    <property type="term" value="P:maturation of SSU-rRNA from tricistronic rRNA transcript (SSU-rRNA, 5.8S rRNA, LSU-rRNA)"/>
    <property type="evidence" value="ECO:0007669"/>
    <property type="project" value="EnsemblFungi"/>
</dbReference>
<dbReference type="GO" id="GO:1990417">
    <property type="term" value="P:snoRNA release from pre-rRNA"/>
    <property type="evidence" value="ECO:0007669"/>
    <property type="project" value="EnsemblFungi"/>
</dbReference>
<dbReference type="CDD" id="cd17942">
    <property type="entry name" value="DEADc_DDX18"/>
    <property type="match status" value="1"/>
</dbReference>
<dbReference type="CDD" id="cd18787">
    <property type="entry name" value="SF2_C_DEAD"/>
    <property type="match status" value="1"/>
</dbReference>
<dbReference type="FunFam" id="3.40.50.300:FF:000379">
    <property type="entry name" value="RNA helicase"/>
    <property type="match status" value="1"/>
</dbReference>
<dbReference type="FunFam" id="3.40.50.300:FF:000460">
    <property type="entry name" value="RNA helicase"/>
    <property type="match status" value="1"/>
</dbReference>
<dbReference type="Gene3D" id="3.40.50.300">
    <property type="entry name" value="P-loop containing nucleotide triphosphate hydrolases"/>
    <property type="match status" value="2"/>
</dbReference>
<dbReference type="InterPro" id="IPR044773">
    <property type="entry name" value="DDX18/Has1_DEADc"/>
</dbReference>
<dbReference type="InterPro" id="IPR011545">
    <property type="entry name" value="DEAD/DEAH_box_helicase_dom"/>
</dbReference>
<dbReference type="InterPro" id="IPR014001">
    <property type="entry name" value="Helicase_ATP-bd"/>
</dbReference>
<dbReference type="InterPro" id="IPR001650">
    <property type="entry name" value="Helicase_C-like"/>
</dbReference>
<dbReference type="InterPro" id="IPR027417">
    <property type="entry name" value="P-loop_NTPase"/>
</dbReference>
<dbReference type="InterPro" id="IPR000629">
    <property type="entry name" value="RNA-helicase_DEAD-box_CS"/>
</dbReference>
<dbReference type="InterPro" id="IPR014014">
    <property type="entry name" value="RNA_helicase_DEAD_Q_motif"/>
</dbReference>
<dbReference type="InterPro" id="IPR025313">
    <property type="entry name" value="SPB4-like_CTE"/>
</dbReference>
<dbReference type="PANTHER" id="PTHR24031">
    <property type="entry name" value="RNA HELICASE"/>
    <property type="match status" value="1"/>
</dbReference>
<dbReference type="Pfam" id="PF13959">
    <property type="entry name" value="CTE_SPB4"/>
    <property type="match status" value="1"/>
</dbReference>
<dbReference type="Pfam" id="PF00270">
    <property type="entry name" value="DEAD"/>
    <property type="match status" value="1"/>
</dbReference>
<dbReference type="Pfam" id="PF00271">
    <property type="entry name" value="Helicase_C"/>
    <property type="match status" value="1"/>
</dbReference>
<dbReference type="SMART" id="SM00487">
    <property type="entry name" value="DEXDc"/>
    <property type="match status" value="1"/>
</dbReference>
<dbReference type="SMART" id="SM01178">
    <property type="entry name" value="DUF4217"/>
    <property type="match status" value="1"/>
</dbReference>
<dbReference type="SMART" id="SM00490">
    <property type="entry name" value="HELICc"/>
    <property type="match status" value="1"/>
</dbReference>
<dbReference type="SUPFAM" id="SSF52540">
    <property type="entry name" value="P-loop containing nucleoside triphosphate hydrolases"/>
    <property type="match status" value="2"/>
</dbReference>
<dbReference type="PROSITE" id="PS00039">
    <property type="entry name" value="DEAD_ATP_HELICASE"/>
    <property type="match status" value="1"/>
</dbReference>
<dbReference type="PROSITE" id="PS51192">
    <property type="entry name" value="HELICASE_ATP_BIND_1"/>
    <property type="match status" value="1"/>
</dbReference>
<dbReference type="PROSITE" id="PS51194">
    <property type="entry name" value="HELICASE_CTER"/>
    <property type="match status" value="1"/>
</dbReference>
<dbReference type="PROSITE" id="PS51195">
    <property type="entry name" value="Q_MOTIF"/>
    <property type="match status" value="1"/>
</dbReference>
<proteinExistence type="inferred from homology"/>
<reference key="1">
    <citation type="journal article" date="2003" name="Nature">
        <title>The genome sequence of the filamentous fungus Neurospora crassa.</title>
        <authorList>
            <person name="Galagan J.E."/>
            <person name="Calvo S.E."/>
            <person name="Borkovich K.A."/>
            <person name="Selker E.U."/>
            <person name="Read N.D."/>
            <person name="Jaffe D.B."/>
            <person name="FitzHugh W."/>
            <person name="Ma L.-J."/>
            <person name="Smirnov S."/>
            <person name="Purcell S."/>
            <person name="Rehman B."/>
            <person name="Elkins T."/>
            <person name="Engels R."/>
            <person name="Wang S."/>
            <person name="Nielsen C.B."/>
            <person name="Butler J."/>
            <person name="Endrizzi M."/>
            <person name="Qui D."/>
            <person name="Ianakiev P."/>
            <person name="Bell-Pedersen D."/>
            <person name="Nelson M.A."/>
            <person name="Werner-Washburne M."/>
            <person name="Selitrennikoff C.P."/>
            <person name="Kinsey J.A."/>
            <person name="Braun E.L."/>
            <person name="Zelter A."/>
            <person name="Schulte U."/>
            <person name="Kothe G.O."/>
            <person name="Jedd G."/>
            <person name="Mewes H.-W."/>
            <person name="Staben C."/>
            <person name="Marcotte E."/>
            <person name="Greenberg D."/>
            <person name="Roy A."/>
            <person name="Foley K."/>
            <person name="Naylor J."/>
            <person name="Stange-Thomann N."/>
            <person name="Barrett R."/>
            <person name="Gnerre S."/>
            <person name="Kamal M."/>
            <person name="Kamvysselis M."/>
            <person name="Mauceli E.W."/>
            <person name="Bielke C."/>
            <person name="Rudd S."/>
            <person name="Frishman D."/>
            <person name="Krystofova S."/>
            <person name="Rasmussen C."/>
            <person name="Metzenberg R.L."/>
            <person name="Perkins D.D."/>
            <person name="Kroken S."/>
            <person name="Cogoni C."/>
            <person name="Macino G."/>
            <person name="Catcheside D.E.A."/>
            <person name="Li W."/>
            <person name="Pratt R.J."/>
            <person name="Osmani S.A."/>
            <person name="DeSouza C.P.C."/>
            <person name="Glass N.L."/>
            <person name="Orbach M.J."/>
            <person name="Berglund J.A."/>
            <person name="Voelker R."/>
            <person name="Yarden O."/>
            <person name="Plamann M."/>
            <person name="Seiler S."/>
            <person name="Dunlap J.C."/>
            <person name="Radford A."/>
            <person name="Aramayo R."/>
            <person name="Natvig D.O."/>
            <person name="Alex L.A."/>
            <person name="Mannhaupt G."/>
            <person name="Ebbole D.J."/>
            <person name="Freitag M."/>
            <person name="Paulsen I."/>
            <person name="Sachs M.S."/>
            <person name="Lander E.S."/>
            <person name="Nusbaum C."/>
            <person name="Birren B.W."/>
        </authorList>
    </citation>
    <scope>NUCLEOTIDE SEQUENCE [LARGE SCALE GENOMIC DNA]</scope>
    <source>
        <strain>ATCC 24698 / 74-OR23-1A / CBS 708.71 / DSM 1257 / FGSC 987</strain>
    </source>
</reference>
<evidence type="ECO:0000250" key="1"/>
<evidence type="ECO:0000255" key="2">
    <source>
        <dbReference type="PROSITE-ProRule" id="PRU00541"/>
    </source>
</evidence>
<evidence type="ECO:0000255" key="3">
    <source>
        <dbReference type="PROSITE-ProRule" id="PRU00542"/>
    </source>
</evidence>
<evidence type="ECO:0000256" key="4">
    <source>
        <dbReference type="SAM" id="MobiDB-lite"/>
    </source>
</evidence>
<evidence type="ECO:0000305" key="5"/>
<accession>Q7S2N9</accession>
<name>HAS1_NEUCR</name>
<feature type="chain" id="PRO_0000232214" description="ATP-dependent RNA helicase has-1">
    <location>
        <begin position="1"/>
        <end position="578"/>
    </location>
</feature>
<feature type="domain" description="Helicase ATP-binding" evidence="2">
    <location>
        <begin position="138"/>
        <end position="313"/>
    </location>
</feature>
<feature type="domain" description="Helicase C-terminal" evidence="3">
    <location>
        <begin position="343"/>
        <end position="497"/>
    </location>
</feature>
<feature type="region of interest" description="Disordered" evidence="4">
    <location>
        <begin position="1"/>
        <end position="91"/>
    </location>
</feature>
<feature type="region of interest" description="Disordered" evidence="4">
    <location>
        <begin position="556"/>
        <end position="578"/>
    </location>
</feature>
<feature type="short sequence motif" description="Q motif">
    <location>
        <begin position="107"/>
        <end position="135"/>
    </location>
</feature>
<feature type="short sequence motif" description="DEAD box">
    <location>
        <begin position="260"/>
        <end position="263"/>
    </location>
</feature>
<feature type="short sequence motif" description="Bipartite nuclear localization signal" evidence="1">
    <location>
        <begin position="339"/>
        <end position="355"/>
    </location>
</feature>
<feature type="compositionally biased region" description="Basic and acidic residues" evidence="4">
    <location>
        <begin position="13"/>
        <end position="26"/>
    </location>
</feature>
<feature type="compositionally biased region" description="Basic residues" evidence="4">
    <location>
        <begin position="27"/>
        <end position="36"/>
    </location>
</feature>
<feature type="compositionally biased region" description="Acidic residues" evidence="4">
    <location>
        <begin position="43"/>
        <end position="54"/>
    </location>
</feature>
<feature type="compositionally biased region" description="Acidic residues" evidence="4">
    <location>
        <begin position="77"/>
        <end position="88"/>
    </location>
</feature>
<feature type="binding site" evidence="2">
    <location>
        <begin position="151"/>
        <end position="158"/>
    </location>
    <ligand>
        <name>ATP</name>
        <dbReference type="ChEBI" id="CHEBI:30616"/>
    </ligand>
</feature>
<sequence>MASEFSKKRKLKDAKIATEDGAATDKKTKKVKKDKKEKKAAEEVVEDATPEEENDAQKAEEQQDGDEVIPTGNGDKEDSDDKDAEAGDELTKTNDSLIAPSIATNATDFSELNLSDKTMKAIAEMGFTKMTEIQRRGIPPLLAGKDVLGAAKTGSGKTLAFLIPAIEMLSSLRFKPRNGTGAIVVTPTRELALQIFGVARELMKNHSQTYGVVIGGANRRAEAEKLGKGVNLLIATPGRLLDHLQNTPFVFKNMRSLIIDEADRILEIGFEDEMRQIIKILPKEDRQTMLFSATQTTKVEDLARISLRPGPLYVNVDEEKQFSTVEGLDQGYVVVDADKRFLLLFSFLKKMQKKKVIVFFSSCNSVKYYSELLQYIDLQVLDLHGKQKQQKRTNTFFEFCNAKQGTLICTDVAARGLDIPAVDWIVQFDPPDDPRDYIHRVGRTARGNNTKGRSLLFLQPNELGFLAHLKAAKVPVVEYDFPKSKILNVQSQLEKLIGQNYYLNQSAKDGYRSYLHAYASHSLRSVFDIHKLDLVKVAKSFGFSTPPRVDITLASSMSRDKKQTSRRAYGSQPKQNRH</sequence>
<organism>
    <name type="scientific">Neurospora crassa (strain ATCC 24698 / 74-OR23-1A / CBS 708.71 / DSM 1257 / FGSC 987)</name>
    <dbReference type="NCBI Taxonomy" id="367110"/>
    <lineage>
        <taxon>Eukaryota</taxon>
        <taxon>Fungi</taxon>
        <taxon>Dikarya</taxon>
        <taxon>Ascomycota</taxon>
        <taxon>Pezizomycotina</taxon>
        <taxon>Sordariomycetes</taxon>
        <taxon>Sordariomycetidae</taxon>
        <taxon>Sordariales</taxon>
        <taxon>Sordariaceae</taxon>
        <taxon>Neurospora</taxon>
    </lineage>
</organism>